<accession>F4HZX7</accession>
<accession>Q5BPY9</accession>
<accession>Q9LP49</accession>
<evidence type="ECO:0000250" key="1">
    <source>
        <dbReference type="UniProtKB" id="Q9H488"/>
    </source>
</evidence>
<evidence type="ECO:0000255" key="2"/>
<evidence type="ECO:0000255" key="3">
    <source>
        <dbReference type="PROSITE-ProRule" id="PRU00498"/>
    </source>
</evidence>
<evidence type="ECO:0000256" key="4">
    <source>
        <dbReference type="SAM" id="MobiDB-lite"/>
    </source>
</evidence>
<evidence type="ECO:0000305" key="5"/>
<evidence type="ECO:0000312" key="6">
    <source>
        <dbReference type="Araport" id="AT1G29200"/>
    </source>
</evidence>
<evidence type="ECO:0000312" key="7">
    <source>
        <dbReference type="EMBL" id="AAF88118.1"/>
    </source>
</evidence>
<evidence type="ECO:0000312" key="8">
    <source>
        <dbReference type="EMBL" id="ARJ31409.1"/>
    </source>
</evidence>
<comment type="pathway">
    <text evidence="5">Glycan metabolism.</text>
</comment>
<comment type="subcellular location">
    <subcellularLocation>
        <location evidence="2">Membrane</location>
        <topology evidence="5">Single-pass type II membrane protein</topology>
    </subcellularLocation>
</comment>
<comment type="alternative products">
    <event type="alternative splicing"/>
    <isoform>
        <id>F4HZX7-1</id>
        <name>1</name>
        <sequence type="displayed"/>
    </isoform>
    <isoform>
        <id>F4HZX7-2</id>
        <name>2</name>
        <sequence type="described" ref="VSP_059167"/>
    </isoform>
</comment>
<comment type="similarity">
    <text evidence="5">Belongs to the glycosyltransferase GT106 family.</text>
</comment>
<comment type="sequence caution" evidence="5">
    <conflict type="erroneous gene model prediction">
        <sequence resource="EMBL-CDS" id="AAF88118"/>
    </conflict>
</comment>
<keyword id="KW-0025">Alternative splicing</keyword>
<keyword id="KW-0119">Carbohydrate metabolism</keyword>
<keyword id="KW-0294">Fucose metabolism</keyword>
<keyword id="KW-0325">Glycoprotein</keyword>
<keyword id="KW-0328">Glycosyltransferase</keyword>
<keyword id="KW-0472">Membrane</keyword>
<keyword id="KW-1185">Reference proteome</keyword>
<keyword id="KW-0735">Signal-anchor</keyword>
<keyword id="KW-0808">Transferase</keyword>
<keyword id="KW-0812">Transmembrane</keyword>
<keyword id="KW-1133">Transmembrane helix</keyword>
<organism>
    <name type="scientific">Arabidopsis thaliana</name>
    <name type="common">Mouse-ear cress</name>
    <dbReference type="NCBI Taxonomy" id="3702"/>
    <lineage>
        <taxon>Eukaryota</taxon>
        <taxon>Viridiplantae</taxon>
        <taxon>Streptophyta</taxon>
        <taxon>Embryophyta</taxon>
        <taxon>Tracheophyta</taxon>
        <taxon>Spermatophyta</taxon>
        <taxon>Magnoliopsida</taxon>
        <taxon>eudicotyledons</taxon>
        <taxon>Gunneridae</taxon>
        <taxon>Pentapetalae</taxon>
        <taxon>rosids</taxon>
        <taxon>malvids</taxon>
        <taxon>Brassicales</taxon>
        <taxon>Brassicaceae</taxon>
        <taxon>Camelineae</taxon>
        <taxon>Arabidopsis</taxon>
    </lineage>
</organism>
<gene>
    <name evidence="5" type="primary">OFUT8</name>
    <name evidence="6" type="ordered locus">At1g29200</name>
    <name evidence="7" type="ORF">F28N24.11</name>
</gene>
<sequence>MGKQGSPRSPRPETIDKEEKFGRRSLDSLSGNDLLLGRRIYASEVSKAQGSKHDQSSGSSNKFWKKQHSWLRRNFKSIVLMISVTGFIFCMDSIMVSIFHSDSRAVVQDISRLSNMTLHKNGAVDASPVQMYSRLLNLASDSLAKNEFKPDTPNFREERSSKSSQWKPCADNNKAAVALERSRELSNGYIMVSANGGLNQQRVAICNAVAVAALLNATLVLPRFLYSNVWKDPSQFGDIYQEDHFIEYLKDEVNIVKNLPQHLKSTDNKNLSLVTDTELVKEATPVDYIEHVLPLLKKYGMVHLFGYGNRLGFDPLPFDVQRLRCKCNFHALKFAPKIQEAGSLLVKRIRRFKTSRSRLEEALLGESMVKSTVKGEEEPLKYLALHLRFEEDMVAYSLCDFGGGEAERKELQAYREDHFPLLLKRLKKSKPVSPEELRKTGKCPLTPEEATLVLAGLGFKRKTYIYLAGSQIYGGSSRMLPLTRLYPNIATKETLLTPQELAPFKNFSSQLAALDFIACIASDVFAMTDSGSQLSSLVSGFRNYYGNGQAPTLRPNKKRLAAILSDSETIKWKIFEDRVRKMVEEGQKLRTRPYGRSIYRQPRCPECMCKF</sequence>
<protein>
    <recommendedName>
        <fullName evidence="5">O-fucosyltransferase 8</fullName>
        <shortName evidence="5">O-FucT-8</shortName>
        <ecNumber evidence="5">2.4.1.-</ecNumber>
    </recommendedName>
    <alternativeName>
        <fullName evidence="8">O-fucosyltransferase family protein</fullName>
    </alternativeName>
</protein>
<name>OFUT8_ARATH</name>
<reference key="1">
    <citation type="submission" date="2017-04" db="EMBL/GenBank/DDBJ databases">
        <title>Arabidopsis glycosyltransferases: an update.</title>
        <authorList>
            <person name="Zeng W."/>
            <person name="Gluza P."/>
            <person name="Heazlewood J."/>
        </authorList>
    </citation>
    <scope>NUCLEOTIDE SEQUENCE [MRNA] (ISOFORM 1)</scope>
    <source>
        <strain>cv. Columbia</strain>
    </source>
</reference>
<reference key="2">
    <citation type="journal article" date="2000" name="Nature">
        <title>Sequence and analysis of chromosome 1 of the plant Arabidopsis thaliana.</title>
        <authorList>
            <person name="Theologis A."/>
            <person name="Ecker J.R."/>
            <person name="Palm C.J."/>
            <person name="Federspiel N.A."/>
            <person name="Kaul S."/>
            <person name="White O."/>
            <person name="Alonso J."/>
            <person name="Altafi H."/>
            <person name="Araujo R."/>
            <person name="Bowman C.L."/>
            <person name="Brooks S.Y."/>
            <person name="Buehler E."/>
            <person name="Chan A."/>
            <person name="Chao Q."/>
            <person name="Chen H."/>
            <person name="Cheuk R.F."/>
            <person name="Chin C.W."/>
            <person name="Chung M.K."/>
            <person name="Conn L."/>
            <person name="Conway A.B."/>
            <person name="Conway A.R."/>
            <person name="Creasy T.H."/>
            <person name="Dewar K."/>
            <person name="Dunn P."/>
            <person name="Etgu P."/>
            <person name="Feldblyum T.V."/>
            <person name="Feng J.-D."/>
            <person name="Fong B."/>
            <person name="Fujii C.Y."/>
            <person name="Gill J.E."/>
            <person name="Goldsmith A.D."/>
            <person name="Haas B."/>
            <person name="Hansen N.F."/>
            <person name="Hughes B."/>
            <person name="Huizar L."/>
            <person name="Hunter J.L."/>
            <person name="Jenkins J."/>
            <person name="Johnson-Hopson C."/>
            <person name="Khan S."/>
            <person name="Khaykin E."/>
            <person name="Kim C.J."/>
            <person name="Koo H.L."/>
            <person name="Kremenetskaia I."/>
            <person name="Kurtz D.B."/>
            <person name="Kwan A."/>
            <person name="Lam B."/>
            <person name="Langin-Hooper S."/>
            <person name="Lee A."/>
            <person name="Lee J.M."/>
            <person name="Lenz C.A."/>
            <person name="Li J.H."/>
            <person name="Li Y.-P."/>
            <person name="Lin X."/>
            <person name="Liu S.X."/>
            <person name="Liu Z.A."/>
            <person name="Luros J.S."/>
            <person name="Maiti R."/>
            <person name="Marziali A."/>
            <person name="Militscher J."/>
            <person name="Miranda M."/>
            <person name="Nguyen M."/>
            <person name="Nierman W.C."/>
            <person name="Osborne B.I."/>
            <person name="Pai G."/>
            <person name="Peterson J."/>
            <person name="Pham P.K."/>
            <person name="Rizzo M."/>
            <person name="Rooney T."/>
            <person name="Rowley D."/>
            <person name="Sakano H."/>
            <person name="Salzberg S.L."/>
            <person name="Schwartz J.R."/>
            <person name="Shinn P."/>
            <person name="Southwick A.M."/>
            <person name="Sun H."/>
            <person name="Tallon L.J."/>
            <person name="Tambunga G."/>
            <person name="Toriumi M.J."/>
            <person name="Town C.D."/>
            <person name="Utterback T."/>
            <person name="Van Aken S."/>
            <person name="Vaysberg M."/>
            <person name="Vysotskaia V.S."/>
            <person name="Walker M."/>
            <person name="Wu D."/>
            <person name="Yu G."/>
            <person name="Fraser C.M."/>
            <person name="Venter J.C."/>
            <person name="Davis R.W."/>
        </authorList>
    </citation>
    <scope>NUCLEOTIDE SEQUENCE [LARGE SCALE GENOMIC DNA]</scope>
    <source>
        <strain>cv. Columbia</strain>
    </source>
</reference>
<reference key="3">
    <citation type="journal article" date="2017" name="Plant J.">
        <title>Araport11: a complete reannotation of the Arabidopsis thaliana reference genome.</title>
        <authorList>
            <person name="Cheng C.Y."/>
            <person name="Krishnakumar V."/>
            <person name="Chan A.P."/>
            <person name="Thibaud-Nissen F."/>
            <person name="Schobel S."/>
            <person name="Town C.D."/>
        </authorList>
    </citation>
    <scope>GENOME REANNOTATION</scope>
    <source>
        <strain>cv. Columbia</strain>
    </source>
</reference>
<reference key="4">
    <citation type="submission" date="2005-02" db="EMBL/GenBank/DDBJ databases">
        <authorList>
            <person name="Underwood B.A."/>
            <person name="Xiao Y.-L."/>
            <person name="Moskal W.A. Jr."/>
            <person name="Monaghan E.L."/>
            <person name="Wang W."/>
            <person name="Redman J.C."/>
            <person name="Wu H.C."/>
            <person name="Utterback T."/>
            <person name="Town C.D."/>
        </authorList>
    </citation>
    <scope>NUCLEOTIDE SEQUENCE [LARGE SCALE MRNA] (ISOFORM 2)</scope>
    <source>
        <strain>cv. Columbia</strain>
    </source>
</reference>
<reference key="5">
    <citation type="submission" date="2005-07" db="EMBL/GenBank/DDBJ databases">
        <title>Reconstruction of cDNA sequences for hypothetical genes in Arabidopsis thaliana from 5' and 3' RACE products.</title>
        <authorList>
            <person name="Xiao Y."/>
            <person name="Underwood B.A."/>
            <person name="Moskal W."/>
            <person name="Redman J."/>
            <person name="Wang W."/>
            <person name="Monaghan E."/>
            <person name="Wu H.C."/>
            <person name="Utterback T."/>
            <person name="Town C.D."/>
        </authorList>
    </citation>
    <scope>NUCLEOTIDE SEQUENCE [LARGE SCALE MRNA] (ISOFORM 2)</scope>
    <source>
        <strain>cv. Columbia</strain>
    </source>
</reference>
<reference key="6">
    <citation type="journal article" date="2012" name="Front. Plant Sci.">
        <title>Plant glycosyltransferases beyond CAZy: a perspective on DUF families.</title>
        <authorList>
            <person name="Hansen S.F."/>
            <person name="Harholt J."/>
            <person name="Oikawa A."/>
            <person name="Scheller H.V."/>
        </authorList>
    </citation>
    <scope>GENE FAMILY</scope>
    <scope>REVIEW</scope>
</reference>
<reference key="7">
    <citation type="journal article" date="2012" name="PLoS ONE">
        <title>The FRIABLE1 gene product affects cell adhesion in Arabidopsis.</title>
        <authorList>
            <person name="Neumetzler L."/>
            <person name="Humphrey T."/>
            <person name="Lumba S."/>
            <person name="Snyder S."/>
            <person name="Yeats T.H."/>
            <person name="Usadel B."/>
            <person name="Vasilevski A."/>
            <person name="Patel J."/>
            <person name="Rose J.K."/>
            <person name="Persson S."/>
            <person name="Bonetta D."/>
        </authorList>
    </citation>
    <scope>GENE FAMILY</scope>
</reference>
<reference key="8">
    <citation type="journal article" date="2012" name="PLoS ONE">
        <title>Identification of putative rhamnogalacturonan-II specific glycosyltransferases in Arabidopsis using a combination of bioinformatics approaches.</title>
        <authorList>
            <person name="Voxeur A."/>
            <person name="Andre A."/>
            <person name="Breton C."/>
            <person name="Lerouge P."/>
        </authorList>
    </citation>
    <scope>GENE FAMILY</scope>
</reference>
<reference key="9">
    <citation type="journal article" date="2013" name="Plant J.">
        <title>Identification of an additional protein involved in mannan biosynthesis.</title>
        <authorList>
            <person name="Wang Y."/>
            <person name="Mortimer J.C."/>
            <person name="Davis J."/>
            <person name="Dupree P."/>
            <person name="Keegstra K."/>
        </authorList>
    </citation>
    <scope>GENE FAMILY</scope>
</reference>
<reference key="10">
    <citation type="journal article" date="2014" name="Plant J.">
        <title>The plant glycosyltransferase clone collection for functional genomics.</title>
        <authorList>
            <person name="Lao J."/>
            <person name="Oikawa A."/>
            <person name="Bromley J.R."/>
            <person name="McInerney P."/>
            <person name="Suttangkakul A."/>
            <person name="Smith-Moritz A.M."/>
            <person name="Plahar H."/>
            <person name="Chiu T.-Y."/>
            <person name="Gonzalez Fernandez-Nino S.M.G."/>
            <person name="Ebert B."/>
            <person name="Yang F."/>
            <person name="Christiansen K.M."/>
            <person name="Hansen S.F."/>
            <person name="Stonebloom S."/>
            <person name="Adams P.D."/>
            <person name="Ronald P.C."/>
            <person name="Hillson N.J."/>
            <person name="Hadi M.Z."/>
            <person name="Vega-Sanchez M.E."/>
            <person name="Loque D."/>
            <person name="Scheller H.V."/>
            <person name="Heazlewood J.L."/>
        </authorList>
    </citation>
    <scope>WEB RESOURCE</scope>
</reference>
<dbReference type="EC" id="2.4.1.-" evidence="5"/>
<dbReference type="EMBL" id="KY906045">
    <property type="protein sequence ID" value="ARJ31409.1"/>
    <property type="molecule type" value="mRNA"/>
</dbReference>
<dbReference type="EMBL" id="AC021043">
    <property type="protein sequence ID" value="AAF88118.1"/>
    <property type="status" value="ALT_SEQ"/>
    <property type="molecule type" value="Genomic_DNA"/>
</dbReference>
<dbReference type="EMBL" id="CP002684">
    <property type="protein sequence ID" value="AEE31059.1"/>
    <property type="molecule type" value="Genomic_DNA"/>
</dbReference>
<dbReference type="EMBL" id="CP002684">
    <property type="protein sequence ID" value="AEE31058.1"/>
    <property type="molecule type" value="Genomic_DNA"/>
</dbReference>
<dbReference type="EMBL" id="CP002684">
    <property type="protein sequence ID" value="ANM59998.1"/>
    <property type="molecule type" value="Genomic_DNA"/>
</dbReference>
<dbReference type="EMBL" id="AY924689">
    <property type="protein sequence ID" value="AAX23764.1"/>
    <property type="molecule type" value="mRNA"/>
</dbReference>
<dbReference type="EMBL" id="DQ132669">
    <property type="protein sequence ID" value="AAZ52699.1"/>
    <property type="molecule type" value="mRNA"/>
</dbReference>
<dbReference type="PIR" id="E86414">
    <property type="entry name" value="E86414"/>
</dbReference>
<dbReference type="RefSeq" id="NP_001117377.1">
    <molecule id="F4HZX7-1"/>
    <property type="nucleotide sequence ID" value="NM_001123905.1"/>
</dbReference>
<dbReference type="RefSeq" id="NP_001322313.1">
    <molecule id="F4HZX7-2"/>
    <property type="nucleotide sequence ID" value="NM_001332841.1"/>
</dbReference>
<dbReference type="RefSeq" id="NP_174215.2">
    <molecule id="F4HZX7-2"/>
    <property type="nucleotide sequence ID" value="NM_102661.3"/>
</dbReference>
<dbReference type="SMR" id="F4HZX7"/>
<dbReference type="FunCoup" id="F4HZX7">
    <property type="interactions" value="144"/>
</dbReference>
<dbReference type="GlyCosmos" id="F4HZX7">
    <property type="glycosylation" value="4 sites, No reported glycans"/>
</dbReference>
<dbReference type="GlyGen" id="F4HZX7">
    <property type="glycosylation" value="4 sites"/>
</dbReference>
<dbReference type="PaxDb" id="3702-AT1G29200.2"/>
<dbReference type="ProteomicsDB" id="238938">
    <molecule id="F4HZX7-1"/>
</dbReference>
<dbReference type="EnsemblPlants" id="AT1G29200.1">
    <molecule id="F4HZX7-2"/>
    <property type="protein sequence ID" value="AT1G29200.1"/>
    <property type="gene ID" value="AT1G29200"/>
</dbReference>
<dbReference type="EnsemblPlants" id="AT1G29200.2">
    <molecule id="F4HZX7-1"/>
    <property type="protein sequence ID" value="AT1G29200.2"/>
    <property type="gene ID" value="AT1G29200"/>
</dbReference>
<dbReference type="EnsemblPlants" id="AT1G29200.4">
    <molecule id="F4HZX7-2"/>
    <property type="protein sequence ID" value="AT1G29200.4"/>
    <property type="gene ID" value="AT1G29200"/>
</dbReference>
<dbReference type="GeneID" id="839795"/>
<dbReference type="Gramene" id="AT1G29200.1">
    <molecule id="F4HZX7-2"/>
    <property type="protein sequence ID" value="AT1G29200.1"/>
    <property type="gene ID" value="AT1G29200"/>
</dbReference>
<dbReference type="Gramene" id="AT1G29200.2">
    <molecule id="F4HZX7-1"/>
    <property type="protein sequence ID" value="AT1G29200.2"/>
    <property type="gene ID" value="AT1G29200"/>
</dbReference>
<dbReference type="Gramene" id="AT1G29200.4">
    <molecule id="F4HZX7-2"/>
    <property type="protein sequence ID" value="AT1G29200.4"/>
    <property type="gene ID" value="AT1G29200"/>
</dbReference>
<dbReference type="KEGG" id="ath:AT1G29200"/>
<dbReference type="Araport" id="AT1G29200"/>
<dbReference type="TAIR" id="AT1G29200"/>
<dbReference type="eggNOG" id="ENOG502QVVB">
    <property type="taxonomic scope" value="Eukaryota"/>
</dbReference>
<dbReference type="InParanoid" id="F4HZX7"/>
<dbReference type="OMA" id="RNMVEEY"/>
<dbReference type="PRO" id="PR:F4HZX7"/>
<dbReference type="Proteomes" id="UP000006548">
    <property type="component" value="Chromosome 1"/>
</dbReference>
<dbReference type="ExpressionAtlas" id="F4HZX7">
    <property type="expression patterns" value="baseline and differential"/>
</dbReference>
<dbReference type="GO" id="GO:0016020">
    <property type="term" value="C:membrane"/>
    <property type="evidence" value="ECO:0007669"/>
    <property type="project" value="UniProtKB-SubCell"/>
</dbReference>
<dbReference type="GO" id="GO:0016757">
    <property type="term" value="F:glycosyltransferase activity"/>
    <property type="evidence" value="ECO:0007669"/>
    <property type="project" value="UniProtKB-KW"/>
</dbReference>
<dbReference type="GO" id="GO:0006004">
    <property type="term" value="P:fucose metabolic process"/>
    <property type="evidence" value="ECO:0007669"/>
    <property type="project" value="UniProtKB-KW"/>
</dbReference>
<dbReference type="CDD" id="cd11299">
    <property type="entry name" value="O-FucT_plant"/>
    <property type="match status" value="1"/>
</dbReference>
<dbReference type="InterPro" id="IPR024709">
    <property type="entry name" value="FucosylTrfase_pln"/>
</dbReference>
<dbReference type="InterPro" id="IPR019378">
    <property type="entry name" value="GDP-Fuc_O-FucTrfase"/>
</dbReference>
<dbReference type="InterPro" id="IPR052272">
    <property type="entry name" value="GT106_glycosyltransferase"/>
</dbReference>
<dbReference type="PANTHER" id="PTHR31933">
    <property type="entry name" value="O-FUCOSYLTRANSFERASE 2-RELATED"/>
    <property type="match status" value="1"/>
</dbReference>
<dbReference type="PANTHER" id="PTHR31933:SF4">
    <property type="entry name" value="O-FUCOSYLTRANSFERASE 8"/>
    <property type="match status" value="1"/>
</dbReference>
<dbReference type="Pfam" id="PF10250">
    <property type="entry name" value="O-FucT"/>
    <property type="match status" value="1"/>
</dbReference>
<dbReference type="PIRSF" id="PIRSF009360">
    <property type="entry name" value="UCP009360"/>
    <property type="match status" value="1"/>
</dbReference>
<proteinExistence type="evidence at transcript level"/>
<feature type="chain" id="PRO_0000442071" description="O-fucosyltransferase 8">
    <location>
        <begin position="1"/>
        <end position="611"/>
    </location>
</feature>
<feature type="transmembrane region" description="Helical; Signal-anchor for type II membrane protein" evidence="5">
    <location>
        <begin position="78"/>
        <end position="98"/>
    </location>
</feature>
<feature type="region of interest" description="Disordered" evidence="4">
    <location>
        <begin position="1"/>
        <end position="29"/>
    </location>
</feature>
<feature type="compositionally biased region" description="Basic and acidic residues" evidence="4">
    <location>
        <begin position="10"/>
        <end position="26"/>
    </location>
</feature>
<feature type="binding site" evidence="1">
    <location>
        <begin position="386"/>
        <end position="388"/>
    </location>
    <ligand>
        <name>substrate</name>
    </ligand>
</feature>
<feature type="glycosylation site" description="N-linked (GlcNAc...) asparagine" evidence="3">
    <location>
        <position position="115"/>
    </location>
</feature>
<feature type="glycosylation site" description="N-linked (GlcNAc...) asparagine" evidence="3">
    <location>
        <position position="216"/>
    </location>
</feature>
<feature type="glycosylation site" description="N-linked (GlcNAc...) asparagine" evidence="3">
    <location>
        <position position="270"/>
    </location>
</feature>
<feature type="glycosylation site" description="N-linked (GlcNAc...) asparagine" evidence="3">
    <location>
        <position position="506"/>
    </location>
</feature>
<feature type="splice variant" id="VSP_059167" description="In isoform 2.">
    <original>MGKQGSPRSPRPETIDKEEKFGRRSLDSLSGNDLLLGRRIYASEVSKAQGSKHDQSSGSSNKFWKKQHSWLRRNFKSIVLMISVTGFIFCMDSIMVSIFHSDSRAVVQDISRLSNMTLH</original>
    <variation>MSI</variation>
    <location>
        <begin position="1"/>
        <end position="119"/>
    </location>
</feature>